<sequence length="177" mass="18641">MSRVGKSPVSIPAGVDVSIKDDQISVKGAGGVLSLAQNALVKVSNNEGKLSFEPVNDSREANAMSGTVRQLVNNMVVGVSKGFEKKLTLIGVGFKAAASGNKLNLAIGFSHPVNFEMPTGITVATPTPTEIVIKGADRQVVGQLAAEIRAVRPPEPYKGKGIRYADEKVTIKETKKK</sequence>
<comment type="function">
    <text evidence="1">This protein binds to the 23S rRNA, and is important in its secondary structure. It is located near the subunit interface in the base of the L7/L12 stalk, and near the tRNA binding site of the peptidyltransferase center.</text>
</comment>
<comment type="subunit">
    <text evidence="1">Part of the 50S ribosomal subunit.</text>
</comment>
<comment type="similarity">
    <text evidence="1">Belongs to the universal ribosomal protein uL6 family.</text>
</comment>
<keyword id="KW-1185">Reference proteome</keyword>
<keyword id="KW-0687">Ribonucleoprotein</keyword>
<keyword id="KW-0689">Ribosomal protein</keyword>
<keyword id="KW-0694">RNA-binding</keyword>
<keyword id="KW-0699">rRNA-binding</keyword>
<evidence type="ECO:0000255" key="1">
    <source>
        <dbReference type="HAMAP-Rule" id="MF_01365"/>
    </source>
</evidence>
<evidence type="ECO:0000305" key="2"/>
<gene>
    <name evidence="1" type="primary">rplF</name>
    <name type="ordered locus">Dtpsy_0388</name>
</gene>
<protein>
    <recommendedName>
        <fullName evidence="1">Large ribosomal subunit protein uL6</fullName>
    </recommendedName>
    <alternativeName>
        <fullName evidence="2">50S ribosomal protein L6</fullName>
    </alternativeName>
</protein>
<organism>
    <name type="scientific">Acidovorax ebreus (strain TPSY)</name>
    <name type="common">Diaphorobacter sp. (strain TPSY)</name>
    <dbReference type="NCBI Taxonomy" id="535289"/>
    <lineage>
        <taxon>Bacteria</taxon>
        <taxon>Pseudomonadati</taxon>
        <taxon>Pseudomonadota</taxon>
        <taxon>Betaproteobacteria</taxon>
        <taxon>Burkholderiales</taxon>
        <taxon>Comamonadaceae</taxon>
        <taxon>Diaphorobacter</taxon>
    </lineage>
</organism>
<feature type="chain" id="PRO_1000166808" description="Large ribosomal subunit protein uL6">
    <location>
        <begin position="1"/>
        <end position="177"/>
    </location>
</feature>
<accession>B9MBV2</accession>
<name>RL6_ACIET</name>
<reference key="1">
    <citation type="submission" date="2009-01" db="EMBL/GenBank/DDBJ databases">
        <title>Complete sequence of Diaphorobacter sp. TPSY.</title>
        <authorList>
            <consortium name="US DOE Joint Genome Institute"/>
            <person name="Lucas S."/>
            <person name="Copeland A."/>
            <person name="Lapidus A."/>
            <person name="Glavina del Rio T."/>
            <person name="Tice H."/>
            <person name="Bruce D."/>
            <person name="Goodwin L."/>
            <person name="Pitluck S."/>
            <person name="Chertkov O."/>
            <person name="Brettin T."/>
            <person name="Detter J.C."/>
            <person name="Han C."/>
            <person name="Larimer F."/>
            <person name="Land M."/>
            <person name="Hauser L."/>
            <person name="Kyrpides N."/>
            <person name="Mikhailova N."/>
            <person name="Coates J.D."/>
        </authorList>
    </citation>
    <scope>NUCLEOTIDE SEQUENCE [LARGE SCALE GENOMIC DNA]</scope>
    <source>
        <strain>TPSY</strain>
    </source>
</reference>
<proteinExistence type="inferred from homology"/>
<dbReference type="EMBL" id="CP001392">
    <property type="protein sequence ID" value="ACM31872.1"/>
    <property type="molecule type" value="Genomic_DNA"/>
</dbReference>
<dbReference type="RefSeq" id="WP_011803858.1">
    <property type="nucleotide sequence ID" value="NC_011992.1"/>
</dbReference>
<dbReference type="SMR" id="B9MBV2"/>
<dbReference type="GeneID" id="84683098"/>
<dbReference type="KEGG" id="dia:Dtpsy_0388"/>
<dbReference type="eggNOG" id="COG0097">
    <property type="taxonomic scope" value="Bacteria"/>
</dbReference>
<dbReference type="HOGENOM" id="CLU_065464_1_2_4"/>
<dbReference type="Proteomes" id="UP000000450">
    <property type="component" value="Chromosome"/>
</dbReference>
<dbReference type="GO" id="GO:0022625">
    <property type="term" value="C:cytosolic large ribosomal subunit"/>
    <property type="evidence" value="ECO:0007669"/>
    <property type="project" value="TreeGrafter"/>
</dbReference>
<dbReference type="GO" id="GO:0019843">
    <property type="term" value="F:rRNA binding"/>
    <property type="evidence" value="ECO:0007669"/>
    <property type="project" value="UniProtKB-UniRule"/>
</dbReference>
<dbReference type="GO" id="GO:0003735">
    <property type="term" value="F:structural constituent of ribosome"/>
    <property type="evidence" value="ECO:0007669"/>
    <property type="project" value="InterPro"/>
</dbReference>
<dbReference type="GO" id="GO:0002181">
    <property type="term" value="P:cytoplasmic translation"/>
    <property type="evidence" value="ECO:0007669"/>
    <property type="project" value="TreeGrafter"/>
</dbReference>
<dbReference type="FunFam" id="3.90.930.12:FF:000001">
    <property type="entry name" value="50S ribosomal protein L6"/>
    <property type="match status" value="1"/>
</dbReference>
<dbReference type="FunFam" id="3.90.930.12:FF:000002">
    <property type="entry name" value="50S ribosomal protein L6"/>
    <property type="match status" value="1"/>
</dbReference>
<dbReference type="Gene3D" id="3.90.930.12">
    <property type="entry name" value="Ribosomal protein L6, alpha-beta domain"/>
    <property type="match status" value="2"/>
</dbReference>
<dbReference type="HAMAP" id="MF_01365_B">
    <property type="entry name" value="Ribosomal_uL6_B"/>
    <property type="match status" value="1"/>
</dbReference>
<dbReference type="InterPro" id="IPR000702">
    <property type="entry name" value="Ribosomal_uL6-like"/>
</dbReference>
<dbReference type="InterPro" id="IPR036789">
    <property type="entry name" value="Ribosomal_uL6-like_a/b-dom_sf"/>
</dbReference>
<dbReference type="InterPro" id="IPR020040">
    <property type="entry name" value="Ribosomal_uL6_a/b-dom"/>
</dbReference>
<dbReference type="InterPro" id="IPR019906">
    <property type="entry name" value="Ribosomal_uL6_bac-type"/>
</dbReference>
<dbReference type="InterPro" id="IPR002358">
    <property type="entry name" value="Ribosomal_uL6_CS"/>
</dbReference>
<dbReference type="NCBIfam" id="TIGR03654">
    <property type="entry name" value="L6_bact"/>
    <property type="match status" value="1"/>
</dbReference>
<dbReference type="PANTHER" id="PTHR11655">
    <property type="entry name" value="60S/50S RIBOSOMAL PROTEIN L6/L9"/>
    <property type="match status" value="1"/>
</dbReference>
<dbReference type="PANTHER" id="PTHR11655:SF14">
    <property type="entry name" value="LARGE RIBOSOMAL SUBUNIT PROTEIN UL6M"/>
    <property type="match status" value="1"/>
</dbReference>
<dbReference type="Pfam" id="PF00347">
    <property type="entry name" value="Ribosomal_L6"/>
    <property type="match status" value="2"/>
</dbReference>
<dbReference type="PIRSF" id="PIRSF002162">
    <property type="entry name" value="Ribosomal_L6"/>
    <property type="match status" value="1"/>
</dbReference>
<dbReference type="PRINTS" id="PR00059">
    <property type="entry name" value="RIBOSOMALL6"/>
</dbReference>
<dbReference type="SUPFAM" id="SSF56053">
    <property type="entry name" value="Ribosomal protein L6"/>
    <property type="match status" value="2"/>
</dbReference>
<dbReference type="PROSITE" id="PS00525">
    <property type="entry name" value="RIBOSOMAL_L6_1"/>
    <property type="match status" value="1"/>
</dbReference>